<accession>A4IR35</accession>
<organism>
    <name type="scientific">Geobacillus thermodenitrificans (strain NG80-2)</name>
    <dbReference type="NCBI Taxonomy" id="420246"/>
    <lineage>
        <taxon>Bacteria</taxon>
        <taxon>Bacillati</taxon>
        <taxon>Bacillota</taxon>
        <taxon>Bacilli</taxon>
        <taxon>Bacillales</taxon>
        <taxon>Anoxybacillaceae</taxon>
        <taxon>Geobacillus</taxon>
    </lineage>
</organism>
<reference key="1">
    <citation type="journal article" date="2007" name="Proc. Natl. Acad. Sci. U.S.A.">
        <title>Genome and proteome of long-chain alkane degrading Geobacillus thermodenitrificans NG80-2 isolated from a deep-subsurface oil reservoir.</title>
        <authorList>
            <person name="Feng L."/>
            <person name="Wang W."/>
            <person name="Cheng J."/>
            <person name="Ren Y."/>
            <person name="Zhao G."/>
            <person name="Gao C."/>
            <person name="Tang Y."/>
            <person name="Liu X."/>
            <person name="Han W."/>
            <person name="Peng X."/>
            <person name="Liu R."/>
            <person name="Wang L."/>
        </authorList>
    </citation>
    <scope>NUCLEOTIDE SEQUENCE [LARGE SCALE GENOMIC DNA]</scope>
    <source>
        <strain>NG80-2</strain>
    </source>
</reference>
<protein>
    <recommendedName>
        <fullName evidence="1">Elongation factor 4</fullName>
        <shortName evidence="1">EF-4</shortName>
        <ecNumber evidence="1">3.6.5.n1</ecNumber>
    </recommendedName>
    <alternativeName>
        <fullName evidence="1">Ribosomal back-translocase LepA</fullName>
    </alternativeName>
</protein>
<sequence>MNREERLKRQERIRNFSIIAHIDHGKSTLADRILEKTGALSERELREQTLDMMELERERGITIKLNAVQLTYKAKNGEEYIFHLIDTPGHVDFTYEVSRSLAACEGAILVVDAAQGIEAQTLANVYLAIDNNLEILPVINKIDLPSAEPERVRQEIEDVIGLDASEAVLASAKVGIGVEDILKQIVEKIPAPSGDPDAPLKALIFDSLYDPYRGVVAYVRIVDGTVKPGQRIKMMSTGKEFEVTEVGVFTPKPKVVDELMVGDVGYLTASIKNVQDTRVGDTITDAERPAAEPLPGYRKLNPMVFCGMYPIDTARYNDLREALEKLQLNDAALHFEPETSQALGFGFRCGFLGLLHMEIIQERIEREFHIDLITTAPSVVYKVYLTDGTEVDVDNPTNMPDPQKIDRIEEPYVKATIMVPNDYVGPVMELCQGKRGTFVDMQYLDEKRVMLIYDIPLSEIVYDFFDALKSNTKGYASFDYELIGYRPSNLVKMDILLNGEKIDALSFIVHRDSAYERGKVIVEKLKDLIPRQQFEVPVQAAIGNKIIARSTIKALRKNVLAKCYGGDVSRKRKLLEKQKEGKKRMKQIGSVEVPQEAFMAVLKIDDQKK</sequence>
<dbReference type="EC" id="3.6.5.n1" evidence="1"/>
<dbReference type="EMBL" id="CP000557">
    <property type="protein sequence ID" value="ABO67789.1"/>
    <property type="molecule type" value="Genomic_DNA"/>
</dbReference>
<dbReference type="RefSeq" id="WP_011887843.1">
    <property type="nucleotide sequence ID" value="NC_009328.1"/>
</dbReference>
<dbReference type="SMR" id="A4IR35"/>
<dbReference type="KEGG" id="gtn:GTNG_2444"/>
<dbReference type="eggNOG" id="COG0481">
    <property type="taxonomic scope" value="Bacteria"/>
</dbReference>
<dbReference type="HOGENOM" id="CLU_009995_3_3_9"/>
<dbReference type="Proteomes" id="UP000001578">
    <property type="component" value="Chromosome"/>
</dbReference>
<dbReference type="GO" id="GO:0005886">
    <property type="term" value="C:plasma membrane"/>
    <property type="evidence" value="ECO:0007669"/>
    <property type="project" value="UniProtKB-SubCell"/>
</dbReference>
<dbReference type="GO" id="GO:0005525">
    <property type="term" value="F:GTP binding"/>
    <property type="evidence" value="ECO:0007669"/>
    <property type="project" value="UniProtKB-UniRule"/>
</dbReference>
<dbReference type="GO" id="GO:0003924">
    <property type="term" value="F:GTPase activity"/>
    <property type="evidence" value="ECO:0007669"/>
    <property type="project" value="UniProtKB-UniRule"/>
</dbReference>
<dbReference type="GO" id="GO:0043022">
    <property type="term" value="F:ribosome binding"/>
    <property type="evidence" value="ECO:0007669"/>
    <property type="project" value="UniProtKB-UniRule"/>
</dbReference>
<dbReference type="GO" id="GO:0003746">
    <property type="term" value="F:translation elongation factor activity"/>
    <property type="evidence" value="ECO:0007669"/>
    <property type="project" value="UniProtKB-UniRule"/>
</dbReference>
<dbReference type="GO" id="GO:0045727">
    <property type="term" value="P:positive regulation of translation"/>
    <property type="evidence" value="ECO:0007669"/>
    <property type="project" value="UniProtKB-UniRule"/>
</dbReference>
<dbReference type="CDD" id="cd03699">
    <property type="entry name" value="EF4_II"/>
    <property type="match status" value="1"/>
</dbReference>
<dbReference type="CDD" id="cd16260">
    <property type="entry name" value="EF4_III"/>
    <property type="match status" value="1"/>
</dbReference>
<dbReference type="CDD" id="cd01890">
    <property type="entry name" value="LepA"/>
    <property type="match status" value="1"/>
</dbReference>
<dbReference type="CDD" id="cd03709">
    <property type="entry name" value="lepA_C"/>
    <property type="match status" value="1"/>
</dbReference>
<dbReference type="FunFam" id="3.40.50.300:FF:000078">
    <property type="entry name" value="Elongation factor 4"/>
    <property type="match status" value="1"/>
</dbReference>
<dbReference type="FunFam" id="2.40.30.10:FF:000015">
    <property type="entry name" value="Translation factor GUF1, mitochondrial"/>
    <property type="match status" value="1"/>
</dbReference>
<dbReference type="FunFam" id="3.30.70.240:FF:000007">
    <property type="entry name" value="Translation factor GUF1, mitochondrial"/>
    <property type="match status" value="1"/>
</dbReference>
<dbReference type="FunFam" id="3.30.70.2570:FF:000001">
    <property type="entry name" value="Translation factor GUF1, mitochondrial"/>
    <property type="match status" value="1"/>
</dbReference>
<dbReference type="FunFam" id="3.30.70.870:FF:000004">
    <property type="entry name" value="Translation factor GUF1, mitochondrial"/>
    <property type="match status" value="1"/>
</dbReference>
<dbReference type="Gene3D" id="3.30.70.240">
    <property type="match status" value="1"/>
</dbReference>
<dbReference type="Gene3D" id="3.30.70.2570">
    <property type="entry name" value="Elongation factor 4, C-terminal domain"/>
    <property type="match status" value="1"/>
</dbReference>
<dbReference type="Gene3D" id="3.30.70.870">
    <property type="entry name" value="Elongation Factor G (Translational Gtpase), domain 3"/>
    <property type="match status" value="1"/>
</dbReference>
<dbReference type="Gene3D" id="3.40.50.300">
    <property type="entry name" value="P-loop containing nucleotide triphosphate hydrolases"/>
    <property type="match status" value="1"/>
</dbReference>
<dbReference type="Gene3D" id="2.40.30.10">
    <property type="entry name" value="Translation factors"/>
    <property type="match status" value="1"/>
</dbReference>
<dbReference type="HAMAP" id="MF_00071">
    <property type="entry name" value="LepA"/>
    <property type="match status" value="1"/>
</dbReference>
<dbReference type="InterPro" id="IPR006297">
    <property type="entry name" value="EF-4"/>
</dbReference>
<dbReference type="InterPro" id="IPR035647">
    <property type="entry name" value="EFG_III/V"/>
</dbReference>
<dbReference type="InterPro" id="IPR000640">
    <property type="entry name" value="EFG_V-like"/>
</dbReference>
<dbReference type="InterPro" id="IPR004161">
    <property type="entry name" value="EFTu-like_2"/>
</dbReference>
<dbReference type="InterPro" id="IPR038363">
    <property type="entry name" value="LepA_C_sf"/>
</dbReference>
<dbReference type="InterPro" id="IPR013842">
    <property type="entry name" value="LepA_CTD"/>
</dbReference>
<dbReference type="InterPro" id="IPR035654">
    <property type="entry name" value="LepA_IV"/>
</dbReference>
<dbReference type="InterPro" id="IPR027417">
    <property type="entry name" value="P-loop_NTPase"/>
</dbReference>
<dbReference type="InterPro" id="IPR005225">
    <property type="entry name" value="Small_GTP-bd"/>
</dbReference>
<dbReference type="InterPro" id="IPR000795">
    <property type="entry name" value="T_Tr_GTP-bd_dom"/>
</dbReference>
<dbReference type="InterPro" id="IPR009000">
    <property type="entry name" value="Transl_B-barrel_sf"/>
</dbReference>
<dbReference type="NCBIfam" id="TIGR01393">
    <property type="entry name" value="lepA"/>
    <property type="match status" value="1"/>
</dbReference>
<dbReference type="NCBIfam" id="TIGR00231">
    <property type="entry name" value="small_GTP"/>
    <property type="match status" value="1"/>
</dbReference>
<dbReference type="PANTHER" id="PTHR43512:SF4">
    <property type="entry name" value="TRANSLATION FACTOR GUF1 HOMOLOG, CHLOROPLASTIC"/>
    <property type="match status" value="1"/>
</dbReference>
<dbReference type="PANTHER" id="PTHR43512">
    <property type="entry name" value="TRANSLATION FACTOR GUF1-RELATED"/>
    <property type="match status" value="1"/>
</dbReference>
<dbReference type="Pfam" id="PF00679">
    <property type="entry name" value="EFG_C"/>
    <property type="match status" value="1"/>
</dbReference>
<dbReference type="Pfam" id="PF00009">
    <property type="entry name" value="GTP_EFTU"/>
    <property type="match status" value="1"/>
</dbReference>
<dbReference type="Pfam" id="PF03144">
    <property type="entry name" value="GTP_EFTU_D2"/>
    <property type="match status" value="1"/>
</dbReference>
<dbReference type="Pfam" id="PF06421">
    <property type="entry name" value="LepA_C"/>
    <property type="match status" value="1"/>
</dbReference>
<dbReference type="PRINTS" id="PR00315">
    <property type="entry name" value="ELONGATNFCT"/>
</dbReference>
<dbReference type="SMART" id="SM00838">
    <property type="entry name" value="EFG_C"/>
    <property type="match status" value="1"/>
</dbReference>
<dbReference type="SUPFAM" id="SSF54980">
    <property type="entry name" value="EF-G C-terminal domain-like"/>
    <property type="match status" value="2"/>
</dbReference>
<dbReference type="SUPFAM" id="SSF52540">
    <property type="entry name" value="P-loop containing nucleoside triphosphate hydrolases"/>
    <property type="match status" value="1"/>
</dbReference>
<dbReference type="SUPFAM" id="SSF50447">
    <property type="entry name" value="Translation proteins"/>
    <property type="match status" value="1"/>
</dbReference>
<dbReference type="PROSITE" id="PS51722">
    <property type="entry name" value="G_TR_2"/>
    <property type="match status" value="1"/>
</dbReference>
<comment type="function">
    <text evidence="1">Required for accurate and efficient protein synthesis under certain stress conditions. May act as a fidelity factor of the translation reaction, by catalyzing a one-codon backward translocation of tRNAs on improperly translocated ribosomes. Back-translocation proceeds from a post-translocation (POST) complex to a pre-translocation (PRE) complex, thus giving elongation factor G a second chance to translocate the tRNAs correctly. Binds to ribosomes in a GTP-dependent manner.</text>
</comment>
<comment type="catalytic activity">
    <reaction evidence="1">
        <text>GTP + H2O = GDP + phosphate + H(+)</text>
        <dbReference type="Rhea" id="RHEA:19669"/>
        <dbReference type="ChEBI" id="CHEBI:15377"/>
        <dbReference type="ChEBI" id="CHEBI:15378"/>
        <dbReference type="ChEBI" id="CHEBI:37565"/>
        <dbReference type="ChEBI" id="CHEBI:43474"/>
        <dbReference type="ChEBI" id="CHEBI:58189"/>
        <dbReference type="EC" id="3.6.5.n1"/>
    </reaction>
</comment>
<comment type="subcellular location">
    <subcellularLocation>
        <location evidence="1">Cell membrane</location>
        <topology evidence="1">Peripheral membrane protein</topology>
        <orientation evidence="1">Cytoplasmic side</orientation>
    </subcellularLocation>
</comment>
<comment type="similarity">
    <text evidence="1">Belongs to the TRAFAC class translation factor GTPase superfamily. Classic translation factor GTPase family. LepA subfamily.</text>
</comment>
<proteinExistence type="inferred from homology"/>
<name>LEPA_GEOTN</name>
<keyword id="KW-1003">Cell membrane</keyword>
<keyword id="KW-0342">GTP-binding</keyword>
<keyword id="KW-0378">Hydrolase</keyword>
<keyword id="KW-0472">Membrane</keyword>
<keyword id="KW-0547">Nucleotide-binding</keyword>
<keyword id="KW-0648">Protein biosynthesis</keyword>
<feature type="chain" id="PRO_1000032000" description="Elongation factor 4">
    <location>
        <begin position="1"/>
        <end position="609"/>
    </location>
</feature>
<feature type="domain" description="tr-type G">
    <location>
        <begin position="11"/>
        <end position="193"/>
    </location>
</feature>
<feature type="binding site" evidence="1">
    <location>
        <begin position="23"/>
        <end position="28"/>
    </location>
    <ligand>
        <name>GTP</name>
        <dbReference type="ChEBI" id="CHEBI:37565"/>
    </ligand>
</feature>
<feature type="binding site" evidence="1">
    <location>
        <begin position="140"/>
        <end position="143"/>
    </location>
    <ligand>
        <name>GTP</name>
        <dbReference type="ChEBI" id="CHEBI:37565"/>
    </ligand>
</feature>
<gene>
    <name evidence="1" type="primary">lepA</name>
    <name type="ordered locus">GTNG_2444</name>
</gene>
<evidence type="ECO:0000255" key="1">
    <source>
        <dbReference type="HAMAP-Rule" id="MF_00071"/>
    </source>
</evidence>